<protein>
    <recommendedName>
        <fullName evidence="1">Acetyl-coenzyme A carboxylase carboxyl transferase subunit beta</fullName>
        <shortName evidence="1">ACCase subunit beta</shortName>
        <shortName evidence="1">Acetyl-CoA carboxylase carboxyltransferase subunit beta</shortName>
        <ecNumber evidence="1">2.1.3.15</ecNumber>
    </recommendedName>
</protein>
<evidence type="ECO:0000255" key="1">
    <source>
        <dbReference type="HAMAP-Rule" id="MF_01395"/>
    </source>
</evidence>
<evidence type="ECO:0000255" key="2">
    <source>
        <dbReference type="PROSITE-ProRule" id="PRU01136"/>
    </source>
</evidence>
<accession>A5I7W9</accession>
<accession>A7G949</accession>
<organism>
    <name type="scientific">Clostridium botulinum (strain Hall / ATCC 3502 / NCTC 13319 / Type A)</name>
    <dbReference type="NCBI Taxonomy" id="441771"/>
    <lineage>
        <taxon>Bacteria</taxon>
        <taxon>Bacillati</taxon>
        <taxon>Bacillota</taxon>
        <taxon>Clostridia</taxon>
        <taxon>Eubacteriales</taxon>
        <taxon>Clostridiaceae</taxon>
        <taxon>Clostridium</taxon>
    </lineage>
</organism>
<feature type="chain" id="PRO_0000389723" description="Acetyl-coenzyme A carboxylase carboxyl transferase subunit beta">
    <location>
        <begin position="1"/>
        <end position="289"/>
    </location>
</feature>
<feature type="domain" description="CoA carboxyltransferase N-terminal" evidence="2">
    <location>
        <begin position="34"/>
        <end position="289"/>
    </location>
</feature>
<feature type="zinc finger region" description="C4-type" evidence="1">
    <location>
        <begin position="38"/>
        <end position="60"/>
    </location>
</feature>
<feature type="binding site" evidence="1">
    <location>
        <position position="38"/>
    </location>
    <ligand>
        <name>Zn(2+)</name>
        <dbReference type="ChEBI" id="CHEBI:29105"/>
    </ligand>
</feature>
<feature type="binding site" evidence="1">
    <location>
        <position position="41"/>
    </location>
    <ligand>
        <name>Zn(2+)</name>
        <dbReference type="ChEBI" id="CHEBI:29105"/>
    </ligand>
</feature>
<feature type="binding site" evidence="1">
    <location>
        <position position="57"/>
    </location>
    <ligand>
        <name>Zn(2+)</name>
        <dbReference type="ChEBI" id="CHEBI:29105"/>
    </ligand>
</feature>
<feature type="binding site" evidence="1">
    <location>
        <position position="60"/>
    </location>
    <ligand>
        <name>Zn(2+)</name>
        <dbReference type="ChEBI" id="CHEBI:29105"/>
    </ligand>
</feature>
<reference key="1">
    <citation type="journal article" date="2007" name="Genome Res.">
        <title>Genome sequence of a proteolytic (Group I) Clostridium botulinum strain Hall A and comparative analysis of the clostridial genomes.</title>
        <authorList>
            <person name="Sebaihia M."/>
            <person name="Peck M.W."/>
            <person name="Minton N.P."/>
            <person name="Thomson N.R."/>
            <person name="Holden M.T.G."/>
            <person name="Mitchell W.J."/>
            <person name="Carter A.T."/>
            <person name="Bentley S.D."/>
            <person name="Mason D.R."/>
            <person name="Crossman L."/>
            <person name="Paul C.J."/>
            <person name="Ivens A."/>
            <person name="Wells-Bennik M.H.J."/>
            <person name="Davis I.J."/>
            <person name="Cerdeno-Tarraga A.M."/>
            <person name="Churcher C."/>
            <person name="Quail M.A."/>
            <person name="Chillingworth T."/>
            <person name="Feltwell T."/>
            <person name="Fraser A."/>
            <person name="Goodhead I."/>
            <person name="Hance Z."/>
            <person name="Jagels K."/>
            <person name="Larke N."/>
            <person name="Maddison M."/>
            <person name="Moule S."/>
            <person name="Mungall K."/>
            <person name="Norbertczak H."/>
            <person name="Rabbinowitsch E."/>
            <person name="Sanders M."/>
            <person name="Simmonds M."/>
            <person name="White B."/>
            <person name="Whithead S."/>
            <person name="Parkhill J."/>
        </authorList>
    </citation>
    <scope>NUCLEOTIDE SEQUENCE [LARGE SCALE GENOMIC DNA]</scope>
    <source>
        <strain>Hall / ATCC 3502 / NCTC 13319 / Type A</strain>
    </source>
</reference>
<reference key="2">
    <citation type="journal article" date="2007" name="PLoS ONE">
        <title>Analysis of the neurotoxin complex genes in Clostridium botulinum A1-A4 and B1 strains: BoNT/A3, /Ba4 and /B1 clusters are located within plasmids.</title>
        <authorList>
            <person name="Smith T.J."/>
            <person name="Hill K.K."/>
            <person name="Foley B.T."/>
            <person name="Detter J.C."/>
            <person name="Munk A.C."/>
            <person name="Bruce D.C."/>
            <person name="Doggett N.A."/>
            <person name="Smith L.A."/>
            <person name="Marks J.D."/>
            <person name="Xie G."/>
            <person name="Brettin T.S."/>
        </authorList>
    </citation>
    <scope>NUCLEOTIDE SEQUENCE [LARGE SCALE GENOMIC DNA]</scope>
    <source>
        <strain>Hall / ATCC 3502 / NCTC 13319 / Type A</strain>
    </source>
</reference>
<sequence length="289" mass="32699">MLKNLFRKTKYITVSQKNIENYKRENTPTIPDGMWVKCNKCGEILYQNDLEKNYMVCNLCGNHFRIGVKERIKYLFDKDTFKEWDYKIKTENPLDFKGYDEKIEHIKEKTNLSEAVTTGKCKIAGMEVVVCIMDSKFMMGSMGSVVGEKITRAIERAIGLRLPVIIFTASGGARMQEGILSLMQMAKVSSALAKLDEEGLLYICVLTDPTTGGVTASFAMLGDIILAEPDALIGFAGKRVIEQTINEKLPEDFQKSEFLLEHGFIDKIVPRSDLRKVLAKLINMHQNSF</sequence>
<dbReference type="EC" id="2.1.3.15" evidence="1"/>
<dbReference type="EMBL" id="CP000727">
    <property type="protein sequence ID" value="ABS36878.1"/>
    <property type="molecule type" value="Genomic_DNA"/>
</dbReference>
<dbReference type="EMBL" id="AM412317">
    <property type="protein sequence ID" value="CAL85154.1"/>
    <property type="molecule type" value="Genomic_DNA"/>
</dbReference>
<dbReference type="RefSeq" id="WP_012048422.1">
    <property type="nucleotide sequence ID" value="NC_009698.1"/>
</dbReference>
<dbReference type="RefSeq" id="YP_001256074.1">
    <property type="nucleotide sequence ID" value="NC_009495.1"/>
</dbReference>
<dbReference type="RefSeq" id="YP_001389314.1">
    <property type="nucleotide sequence ID" value="NC_009698.1"/>
</dbReference>
<dbReference type="SMR" id="A5I7W9"/>
<dbReference type="GeneID" id="5186231"/>
<dbReference type="KEGG" id="cbh:CLC_3573"/>
<dbReference type="KEGG" id="cbo:CBO3595"/>
<dbReference type="PATRIC" id="fig|413999.7.peg.3572"/>
<dbReference type="HOGENOM" id="CLU_015486_1_1_9"/>
<dbReference type="UniPathway" id="UPA00655">
    <property type="reaction ID" value="UER00711"/>
</dbReference>
<dbReference type="PRO" id="PR:A5I7W9"/>
<dbReference type="Proteomes" id="UP000001986">
    <property type="component" value="Chromosome"/>
</dbReference>
<dbReference type="GO" id="GO:0009317">
    <property type="term" value="C:acetyl-CoA carboxylase complex"/>
    <property type="evidence" value="ECO:0007669"/>
    <property type="project" value="InterPro"/>
</dbReference>
<dbReference type="GO" id="GO:0003989">
    <property type="term" value="F:acetyl-CoA carboxylase activity"/>
    <property type="evidence" value="ECO:0007669"/>
    <property type="project" value="InterPro"/>
</dbReference>
<dbReference type="GO" id="GO:0005524">
    <property type="term" value="F:ATP binding"/>
    <property type="evidence" value="ECO:0007669"/>
    <property type="project" value="UniProtKB-KW"/>
</dbReference>
<dbReference type="GO" id="GO:0016743">
    <property type="term" value="F:carboxyl- or carbamoyltransferase activity"/>
    <property type="evidence" value="ECO:0007669"/>
    <property type="project" value="UniProtKB-UniRule"/>
</dbReference>
<dbReference type="GO" id="GO:0008270">
    <property type="term" value="F:zinc ion binding"/>
    <property type="evidence" value="ECO:0007669"/>
    <property type="project" value="UniProtKB-UniRule"/>
</dbReference>
<dbReference type="GO" id="GO:2001295">
    <property type="term" value="P:malonyl-CoA biosynthetic process"/>
    <property type="evidence" value="ECO:0007669"/>
    <property type="project" value="UniProtKB-UniRule"/>
</dbReference>
<dbReference type="GO" id="GO:0071768">
    <property type="term" value="P:mycolic acid biosynthetic process"/>
    <property type="evidence" value="ECO:0000318"/>
    <property type="project" value="GO_Central"/>
</dbReference>
<dbReference type="Gene3D" id="3.90.226.10">
    <property type="entry name" value="2-enoyl-CoA Hydratase, Chain A, domain 1"/>
    <property type="match status" value="1"/>
</dbReference>
<dbReference type="HAMAP" id="MF_01395">
    <property type="entry name" value="AcetylCoA_CT_beta"/>
    <property type="match status" value="1"/>
</dbReference>
<dbReference type="InterPro" id="IPR034733">
    <property type="entry name" value="AcCoA_carboxyl_beta"/>
</dbReference>
<dbReference type="InterPro" id="IPR000438">
    <property type="entry name" value="Acetyl_CoA_COase_Trfase_b_su"/>
</dbReference>
<dbReference type="InterPro" id="IPR029045">
    <property type="entry name" value="ClpP/crotonase-like_dom_sf"/>
</dbReference>
<dbReference type="InterPro" id="IPR011762">
    <property type="entry name" value="COA_CT_N"/>
</dbReference>
<dbReference type="InterPro" id="IPR041010">
    <property type="entry name" value="Znf-ACC"/>
</dbReference>
<dbReference type="NCBIfam" id="TIGR00515">
    <property type="entry name" value="accD"/>
    <property type="match status" value="1"/>
</dbReference>
<dbReference type="PANTHER" id="PTHR42995">
    <property type="entry name" value="ACETYL-COENZYME A CARBOXYLASE CARBOXYL TRANSFERASE SUBUNIT BETA, CHLOROPLASTIC"/>
    <property type="match status" value="1"/>
</dbReference>
<dbReference type="PANTHER" id="PTHR42995:SF5">
    <property type="entry name" value="ACETYL-COENZYME A CARBOXYLASE CARBOXYL TRANSFERASE SUBUNIT BETA, CHLOROPLASTIC"/>
    <property type="match status" value="1"/>
</dbReference>
<dbReference type="Pfam" id="PF01039">
    <property type="entry name" value="Carboxyl_trans"/>
    <property type="match status" value="1"/>
</dbReference>
<dbReference type="Pfam" id="PF17848">
    <property type="entry name" value="Zn_ribbon_ACC"/>
    <property type="match status" value="1"/>
</dbReference>
<dbReference type="PRINTS" id="PR01070">
    <property type="entry name" value="ACCCTRFRASEB"/>
</dbReference>
<dbReference type="SUPFAM" id="SSF52096">
    <property type="entry name" value="ClpP/crotonase"/>
    <property type="match status" value="1"/>
</dbReference>
<dbReference type="PROSITE" id="PS50980">
    <property type="entry name" value="COA_CT_NTER"/>
    <property type="match status" value="1"/>
</dbReference>
<keyword id="KW-0067">ATP-binding</keyword>
<keyword id="KW-0963">Cytoplasm</keyword>
<keyword id="KW-0275">Fatty acid biosynthesis</keyword>
<keyword id="KW-0276">Fatty acid metabolism</keyword>
<keyword id="KW-0444">Lipid biosynthesis</keyword>
<keyword id="KW-0443">Lipid metabolism</keyword>
<keyword id="KW-0479">Metal-binding</keyword>
<keyword id="KW-0547">Nucleotide-binding</keyword>
<keyword id="KW-1185">Reference proteome</keyword>
<keyword id="KW-0808">Transferase</keyword>
<keyword id="KW-0862">Zinc</keyword>
<keyword id="KW-0863">Zinc-finger</keyword>
<proteinExistence type="inferred from homology"/>
<name>ACCD_CLOBH</name>
<comment type="function">
    <text evidence="1">Component of the acetyl coenzyme A carboxylase (ACC) complex. Biotin carboxylase (BC) catalyzes the carboxylation of biotin on its carrier protein (BCCP) and then the CO(2) group is transferred by the transcarboxylase to acetyl-CoA to form malonyl-CoA.</text>
</comment>
<comment type="catalytic activity">
    <reaction evidence="1">
        <text>N(6)-carboxybiotinyl-L-lysyl-[protein] + acetyl-CoA = N(6)-biotinyl-L-lysyl-[protein] + malonyl-CoA</text>
        <dbReference type="Rhea" id="RHEA:54728"/>
        <dbReference type="Rhea" id="RHEA-COMP:10505"/>
        <dbReference type="Rhea" id="RHEA-COMP:10506"/>
        <dbReference type="ChEBI" id="CHEBI:57288"/>
        <dbReference type="ChEBI" id="CHEBI:57384"/>
        <dbReference type="ChEBI" id="CHEBI:83144"/>
        <dbReference type="ChEBI" id="CHEBI:83145"/>
        <dbReference type="EC" id="2.1.3.15"/>
    </reaction>
</comment>
<comment type="cofactor">
    <cofactor evidence="1">
        <name>Zn(2+)</name>
        <dbReference type="ChEBI" id="CHEBI:29105"/>
    </cofactor>
    <text evidence="1">Binds 1 zinc ion per subunit.</text>
</comment>
<comment type="pathway">
    <text evidence="1">Lipid metabolism; malonyl-CoA biosynthesis; malonyl-CoA from acetyl-CoA: step 1/1.</text>
</comment>
<comment type="subunit">
    <text evidence="1">Acetyl-CoA carboxylase is a heterohexamer composed of biotin carboxyl carrier protein (AccB), biotin carboxylase (AccC) and two subunits each of ACCase subunit alpha (AccA) and ACCase subunit beta (AccD).</text>
</comment>
<comment type="subcellular location">
    <subcellularLocation>
        <location evidence="1">Cytoplasm</location>
    </subcellularLocation>
</comment>
<comment type="similarity">
    <text evidence="1">Belongs to the AccD/PCCB family.</text>
</comment>
<gene>
    <name evidence="1" type="primary">accD</name>
    <name type="ordered locus">CBO3595</name>
    <name type="ordered locus">CLC_3573</name>
</gene>